<comment type="function">
    <text evidence="1">Required for disulfide bond formation in some periplasmic proteins. Acts by oxidizing the DsbA protein.</text>
</comment>
<comment type="subcellular location">
    <subcellularLocation>
        <location evidence="1">Cell inner membrane</location>
        <topology evidence="1">Multi-pass membrane protein</topology>
    </subcellularLocation>
</comment>
<comment type="similarity">
    <text evidence="1">Belongs to the DsbB family.</text>
</comment>
<organism>
    <name type="scientific">Pseudomonas fluorescens (strain ATCC BAA-477 / NRRL B-23932 / Pf-5)</name>
    <dbReference type="NCBI Taxonomy" id="220664"/>
    <lineage>
        <taxon>Bacteria</taxon>
        <taxon>Pseudomonadati</taxon>
        <taxon>Pseudomonadota</taxon>
        <taxon>Gammaproteobacteria</taxon>
        <taxon>Pseudomonadales</taxon>
        <taxon>Pseudomonadaceae</taxon>
        <taxon>Pseudomonas</taxon>
    </lineage>
</organism>
<sequence>MSDDRLGLGRERRFLVLLGIICLALIGGALYMQVVLGEAPCPLCILQRYALLLIALFAFIGAAMSSRRGVTVMETLVVICALAGAGVAGHHVYTQFYPSVSCGIDVLQPIVDSLPLAKIFPLGFQVDGFCSTPYPPILGLSLAQWALVAFVLTVILVPLGVVRNRKKTY</sequence>
<accession>Q4K6L6</accession>
<feature type="chain" id="PRO_0000298387" description="Disulfide bond formation protein B 1">
    <location>
        <begin position="1"/>
        <end position="169"/>
    </location>
</feature>
<feature type="topological domain" description="Cytoplasmic" evidence="1">
    <location>
        <begin position="1"/>
        <end position="14"/>
    </location>
</feature>
<feature type="transmembrane region" description="Helical" evidence="1">
    <location>
        <begin position="15"/>
        <end position="31"/>
    </location>
</feature>
<feature type="topological domain" description="Periplasmic" evidence="1">
    <location>
        <begin position="32"/>
        <end position="49"/>
    </location>
</feature>
<feature type="transmembrane region" description="Helical" evidence="1">
    <location>
        <begin position="50"/>
        <end position="64"/>
    </location>
</feature>
<feature type="topological domain" description="Cytoplasmic" evidence="1">
    <location>
        <begin position="65"/>
        <end position="71"/>
    </location>
</feature>
<feature type="transmembrane region" description="Helical" evidence="1">
    <location>
        <begin position="72"/>
        <end position="89"/>
    </location>
</feature>
<feature type="topological domain" description="Periplasmic" evidence="1">
    <location>
        <begin position="90"/>
        <end position="144"/>
    </location>
</feature>
<feature type="transmembrane region" description="Helical" evidence="1">
    <location>
        <begin position="145"/>
        <end position="163"/>
    </location>
</feature>
<feature type="topological domain" description="Cytoplasmic" evidence="1">
    <location>
        <begin position="164"/>
        <end position="169"/>
    </location>
</feature>
<feature type="disulfide bond" description="Redox-active" evidence="1">
    <location>
        <begin position="41"/>
        <end position="44"/>
    </location>
</feature>
<feature type="disulfide bond" description="Redox-active" evidence="1">
    <location>
        <begin position="102"/>
        <end position="130"/>
    </location>
</feature>
<keyword id="KW-0997">Cell inner membrane</keyword>
<keyword id="KW-1003">Cell membrane</keyword>
<keyword id="KW-0143">Chaperone</keyword>
<keyword id="KW-1015">Disulfide bond</keyword>
<keyword id="KW-0249">Electron transport</keyword>
<keyword id="KW-0472">Membrane</keyword>
<keyword id="KW-0560">Oxidoreductase</keyword>
<keyword id="KW-0676">Redox-active center</keyword>
<keyword id="KW-0812">Transmembrane</keyword>
<keyword id="KW-1133">Transmembrane helix</keyword>
<keyword id="KW-0813">Transport</keyword>
<gene>
    <name evidence="1" type="primary">dsbB1</name>
    <name type="ordered locus">PFL_5038</name>
</gene>
<reference key="1">
    <citation type="journal article" date="2005" name="Nat. Biotechnol.">
        <title>Complete genome sequence of the plant commensal Pseudomonas fluorescens Pf-5.</title>
        <authorList>
            <person name="Paulsen I.T."/>
            <person name="Press C.M."/>
            <person name="Ravel J."/>
            <person name="Kobayashi D.Y."/>
            <person name="Myers G.S.A."/>
            <person name="Mavrodi D.V."/>
            <person name="DeBoy R.T."/>
            <person name="Seshadri R."/>
            <person name="Ren Q."/>
            <person name="Madupu R."/>
            <person name="Dodson R.J."/>
            <person name="Durkin A.S."/>
            <person name="Brinkac L.M."/>
            <person name="Daugherty S.C."/>
            <person name="Sullivan S.A."/>
            <person name="Rosovitz M.J."/>
            <person name="Gwinn M.L."/>
            <person name="Zhou L."/>
            <person name="Schneider D.J."/>
            <person name="Cartinhour S.W."/>
            <person name="Nelson W.C."/>
            <person name="Weidman J."/>
            <person name="Watkins K."/>
            <person name="Tran K."/>
            <person name="Khouri H."/>
            <person name="Pierson E.A."/>
            <person name="Pierson L.S. III"/>
            <person name="Thomashow L.S."/>
            <person name="Loper J.E."/>
        </authorList>
    </citation>
    <scope>NUCLEOTIDE SEQUENCE [LARGE SCALE GENOMIC DNA]</scope>
    <source>
        <strain>ATCC BAA-477 / NRRL B-23932 / Pf-5</strain>
    </source>
</reference>
<name>DSBB1_PSEF5</name>
<protein>
    <recommendedName>
        <fullName evidence="1">Disulfide bond formation protein B 1</fullName>
    </recommendedName>
    <alternativeName>
        <fullName evidence="1">Disulfide oxidoreductase 1</fullName>
    </alternativeName>
</protein>
<evidence type="ECO:0000255" key="1">
    <source>
        <dbReference type="HAMAP-Rule" id="MF_00286"/>
    </source>
</evidence>
<proteinExistence type="inferred from homology"/>
<dbReference type="EMBL" id="CP000076">
    <property type="protein sequence ID" value="AAY94266.2"/>
    <property type="molecule type" value="Genomic_DNA"/>
</dbReference>
<dbReference type="RefSeq" id="WP_011063288.1">
    <property type="nucleotide sequence ID" value="NC_004129.6"/>
</dbReference>
<dbReference type="SMR" id="Q4K6L6"/>
<dbReference type="STRING" id="220664.PFL_5038"/>
<dbReference type="KEGG" id="pfl:PFL_5038"/>
<dbReference type="PATRIC" id="fig|220664.5.peg.5157"/>
<dbReference type="eggNOG" id="COG1495">
    <property type="taxonomic scope" value="Bacteria"/>
</dbReference>
<dbReference type="HOGENOM" id="CLU_098660_1_0_6"/>
<dbReference type="Proteomes" id="UP000008540">
    <property type="component" value="Chromosome"/>
</dbReference>
<dbReference type="GO" id="GO:0005886">
    <property type="term" value="C:plasma membrane"/>
    <property type="evidence" value="ECO:0007669"/>
    <property type="project" value="UniProtKB-SubCell"/>
</dbReference>
<dbReference type="GO" id="GO:0009055">
    <property type="term" value="F:electron transfer activity"/>
    <property type="evidence" value="ECO:0007669"/>
    <property type="project" value="UniProtKB-UniRule"/>
</dbReference>
<dbReference type="GO" id="GO:0015035">
    <property type="term" value="F:protein-disulfide reductase activity"/>
    <property type="evidence" value="ECO:0007669"/>
    <property type="project" value="UniProtKB-UniRule"/>
</dbReference>
<dbReference type="GO" id="GO:0006457">
    <property type="term" value="P:protein folding"/>
    <property type="evidence" value="ECO:0007669"/>
    <property type="project" value="InterPro"/>
</dbReference>
<dbReference type="Gene3D" id="1.20.1550.10">
    <property type="entry name" value="DsbB-like"/>
    <property type="match status" value="1"/>
</dbReference>
<dbReference type="HAMAP" id="MF_00286">
    <property type="entry name" value="DsbB"/>
    <property type="match status" value="1"/>
</dbReference>
<dbReference type="InterPro" id="IPR003752">
    <property type="entry name" value="DiS_bond_form_DsbB/BdbC"/>
</dbReference>
<dbReference type="InterPro" id="IPR022920">
    <property type="entry name" value="Disulphide_bond_form_DsbB"/>
</dbReference>
<dbReference type="InterPro" id="IPR050183">
    <property type="entry name" value="DsbB"/>
</dbReference>
<dbReference type="InterPro" id="IPR023380">
    <property type="entry name" value="DsbB-like_sf"/>
</dbReference>
<dbReference type="NCBIfam" id="NF002552">
    <property type="entry name" value="PRK02110.1"/>
    <property type="match status" value="1"/>
</dbReference>
<dbReference type="PANTHER" id="PTHR36570">
    <property type="entry name" value="DISULFIDE BOND FORMATION PROTEIN B"/>
    <property type="match status" value="1"/>
</dbReference>
<dbReference type="PANTHER" id="PTHR36570:SF3">
    <property type="entry name" value="DISULFIDE BOND FORMATION PROTEIN B"/>
    <property type="match status" value="1"/>
</dbReference>
<dbReference type="Pfam" id="PF02600">
    <property type="entry name" value="DsbB"/>
    <property type="match status" value="1"/>
</dbReference>
<dbReference type="SUPFAM" id="SSF158442">
    <property type="entry name" value="DsbB-like"/>
    <property type="match status" value="1"/>
</dbReference>